<keyword id="KW-0235">DNA replication</keyword>
<keyword id="KW-1048">Host nucleus</keyword>
<keyword id="KW-0479">Metal-binding</keyword>
<keyword id="KW-0808">Transferase</keyword>
<keyword id="KW-0862">Zinc</keyword>
<keyword id="KW-0863">Zinc-finger</keyword>
<proteinExistence type="inferred from homology"/>
<protein>
    <recommendedName>
        <fullName evidence="1">DNA primase</fullName>
        <ecNumber evidence="1">2.7.7.-</ecNumber>
    </recommendedName>
</protein>
<name>PRIM_EHV1V</name>
<dbReference type="EC" id="2.7.7.-" evidence="1"/>
<dbReference type="EMBL" id="AY464052">
    <property type="protein sequence ID" value="AAS45891.1"/>
    <property type="molecule type" value="Genomic_DNA"/>
</dbReference>
<dbReference type="KEGG" id="vg:1487515"/>
<dbReference type="Proteomes" id="UP000008296">
    <property type="component" value="Segment"/>
</dbReference>
<dbReference type="GO" id="GO:0042025">
    <property type="term" value="C:host cell nucleus"/>
    <property type="evidence" value="ECO:0007669"/>
    <property type="project" value="UniProtKB-SubCell"/>
</dbReference>
<dbReference type="GO" id="GO:0003899">
    <property type="term" value="F:DNA-directed RNA polymerase activity"/>
    <property type="evidence" value="ECO:0007669"/>
    <property type="project" value="InterPro"/>
</dbReference>
<dbReference type="GO" id="GO:0008270">
    <property type="term" value="F:zinc ion binding"/>
    <property type="evidence" value="ECO:0007669"/>
    <property type="project" value="UniProtKB-KW"/>
</dbReference>
<dbReference type="GO" id="GO:0039686">
    <property type="term" value="P:bidirectional double-stranded viral DNA replication"/>
    <property type="evidence" value="ECO:0007669"/>
    <property type="project" value="InterPro"/>
</dbReference>
<dbReference type="GO" id="GO:0006260">
    <property type="term" value="P:DNA replication"/>
    <property type="evidence" value="ECO:0007669"/>
    <property type="project" value="UniProtKB-KW"/>
</dbReference>
<dbReference type="HAMAP" id="MF_04011">
    <property type="entry name" value="HSV_PRIM"/>
    <property type="match status" value="1"/>
</dbReference>
<dbReference type="InterPro" id="IPR033685">
    <property type="entry name" value="HSV_PRIM"/>
</dbReference>
<dbReference type="Pfam" id="PF03121">
    <property type="entry name" value="Herpes_UL52"/>
    <property type="match status" value="1"/>
</dbReference>
<organism>
    <name type="scientific">Equine herpesvirus 1 (strain V592)</name>
    <name type="common">EHV-1</name>
    <name type="synonym">Equine abortion virus</name>
    <dbReference type="NCBI Taxonomy" id="310273"/>
    <lineage>
        <taxon>Viruses</taxon>
        <taxon>Duplodnaviria</taxon>
        <taxon>Heunggongvirae</taxon>
        <taxon>Peploviricota</taxon>
        <taxon>Herviviricetes</taxon>
        <taxon>Herpesvirales</taxon>
        <taxon>Orthoherpesviridae</taxon>
        <taxon>Alphaherpesvirinae</taxon>
        <taxon>Varicellovirus</taxon>
        <taxon>Varicellovirus equidalpha1</taxon>
        <taxon>Equid alphaherpesvirus 1</taxon>
    </lineage>
</organism>
<evidence type="ECO:0000255" key="1">
    <source>
        <dbReference type="HAMAP-Rule" id="MF_04011"/>
    </source>
</evidence>
<evidence type="ECO:0000256" key="2">
    <source>
        <dbReference type="SAM" id="MobiDB-lite"/>
    </source>
</evidence>
<evidence type="ECO:0000305" key="3"/>
<evidence type="ECO:0000312" key="4">
    <source>
        <dbReference type="EMBL" id="AAS45891.1"/>
    </source>
</evidence>
<accession>P84401</accession>
<accession>Q6S6R4</accession>
<gene>
    <name type="ordered locus">7</name>
</gene>
<sequence>MAQRNPEPTIRVLYATDSCVITYSLMLLTGQESSEGVYAISYDWSSELDDLFGRQPRAPNTDAGDGWSSTEQSDADQLATALLQRKPSVSFCLLSGMVGGASDEPQDRVRPMFVCVFSTWTGARALAMTLSHGHPLSSNTLLQALTEEATFLLHNDLILALAITTENVTARSGRTAAAAKYDPQRGSVKAAVIGHSTGRSGLTSVYIHHENKVLTAFRRLYCNNNTTPFWFASKFGPGEREIVLATRYYLFQAIRCSRSGGTYDLQAVKDFIRTYNVPAAPNPTGLDLTHLTSFSLLSKFCCQSWYSRGPCALALPRYVDLRIQADVAEVSALEGFIAADRQGLRVSDREFITYIYLAHFESFNRKQLYDHLLAVSIADPGDIDRITSTSSLKRGTIEKFFAQVRIQLNIRDYIAHNVNPRVVCLPASIGSQYAQDKTYTPSSTTMSTGSAPLGVCDTSTPILKLLDRVESSLAGRGWIQTIVSPNKPQSVHSTPPLDQSRGDELSPGVSSQCGISRRLLHIASSPPVNGRALPLEVLFGQKGVPGPAPVYRVALPSKRQAFAVIANDRWETTTQNLARPGGSKQAYEGGFALAGFGEIDDCSLAWRDLQLTRTTSGVCRTALASSNASAQMYINRNEIFNSSLAVSNIILDVDFGIKRRVPLGMLHLAMRGFRAGIITTLSLIFSDATVQWDSYPCYFYKTSCPPQLVRALHRGEPSSFPDYVDGVEECYMESDFIDDYAAMEEYTDGPMDDYEMMMVDNECPQAACDNTPPNKEGGKTPLQRLDDTDACECTEKMGFRVTVPVPPPYLLAGPEALRGLARIIQQAVVLERTFTESMCSVLRDFSFIDTGVYSHGRSLRLPFFCKVGDSGEVYGGLYPFYVIPPKCNDVDEFVAQHSNPANFHFHAAPRHPTITHVITDLGGDYVSFFERKVARNREAIMTKRATLESLLSSANVSIKSHEAVEAFVVDVVLGEVVSHLATHFPDQSGEYQTVGVHTVVTKPDWILMQINRSGNAYRSQGFSCLRAKHLRSARGLARTFLSISADVHGRLCASISQQCFATKCGNNKMCTIFTLEVDRAK</sequence>
<feature type="chain" id="PRO_0000116106" description="DNA primase">
    <location>
        <begin position="1"/>
        <end position="1081"/>
    </location>
</feature>
<feature type="zinc finger region" description="CHC2-type" evidence="1">
    <location>
        <begin position="1024"/>
        <end position="1064"/>
    </location>
</feature>
<feature type="region of interest" description="Disordered" evidence="2">
    <location>
        <begin position="484"/>
        <end position="508"/>
    </location>
</feature>
<feature type="compositionally biased region" description="Polar residues" evidence="2">
    <location>
        <begin position="484"/>
        <end position="497"/>
    </location>
</feature>
<feature type="site" description="Essential for primase activity" evidence="1">
    <location>
        <position position="652"/>
    </location>
</feature>
<feature type="site" description="Essential for primase activity" evidence="1">
    <location>
        <position position="654"/>
    </location>
</feature>
<comment type="function">
    <text evidence="1">Essential component of the helicase/primase complex. Unwinds the DNA at the replication forks and generates single-stranded DNA for both leading and lagging strand synthesis. The primase initiates primer synthesis and thereby produces large amount of short RNA primers on the lagging strand that the polymerase elongates using dNTPs.</text>
</comment>
<comment type="subunit">
    <text evidence="1">Associates with the helicase and the primase-associated factor to form the helicase-primase factor.</text>
</comment>
<comment type="subcellular location">
    <subcellularLocation>
        <location evidence="1">Host nucleus</location>
    </subcellularLocation>
    <text evidence="1">Requires the presence of the primase associated factor to properly localize in the host cell nucleus.</text>
</comment>
<comment type="similarity">
    <text evidence="1">Belongs to the herpesviridae DNA primase family.</text>
</comment>
<reference evidence="3 4" key="1">
    <citation type="submission" date="2003-11" db="EMBL/GenBank/DDBJ databases">
        <authorList>
            <person name="Davis-Poynter N."/>
            <person name="Nugent J."/>
            <person name="Birch-Machin I."/>
            <person name="Allen G.P."/>
        </authorList>
    </citation>
    <scope>NUCLEOTIDE SEQUENCE [LARGE SCALE GENOMIC DNA]</scope>
</reference>
<organismHost>
    <name type="scientific">Equus caballus</name>
    <name type="common">Horse</name>
    <dbReference type="NCBI Taxonomy" id="9796"/>
</organismHost>